<name>Y2085_BACHK</name>
<sequence length="71" mass="8492">MKKTFYHYMMKHRAALFSNEISNLAEAMYDDLSFPKQSEDYDEISSYLELSGMLESMSIFDEAWDLYIQDR</sequence>
<organism>
    <name type="scientific">Bacillus thuringiensis subsp. konkukian (strain 97-27)</name>
    <dbReference type="NCBI Taxonomy" id="281309"/>
    <lineage>
        <taxon>Bacteria</taxon>
        <taxon>Bacillati</taxon>
        <taxon>Bacillota</taxon>
        <taxon>Bacilli</taxon>
        <taxon>Bacillales</taxon>
        <taxon>Bacillaceae</taxon>
        <taxon>Bacillus</taxon>
        <taxon>Bacillus cereus group</taxon>
    </lineage>
</organism>
<reference key="1">
    <citation type="journal article" date="2006" name="J. Bacteriol.">
        <title>Pathogenomic sequence analysis of Bacillus cereus and Bacillus thuringiensis isolates closely related to Bacillus anthracis.</title>
        <authorList>
            <person name="Han C.S."/>
            <person name="Xie G."/>
            <person name="Challacombe J.F."/>
            <person name="Altherr M.R."/>
            <person name="Bhotika S.S."/>
            <person name="Bruce D."/>
            <person name="Campbell C.S."/>
            <person name="Campbell M.L."/>
            <person name="Chen J."/>
            <person name="Chertkov O."/>
            <person name="Cleland C."/>
            <person name="Dimitrijevic M."/>
            <person name="Doggett N.A."/>
            <person name="Fawcett J.J."/>
            <person name="Glavina T."/>
            <person name="Goodwin L.A."/>
            <person name="Hill K.K."/>
            <person name="Hitchcock P."/>
            <person name="Jackson P.J."/>
            <person name="Keim P."/>
            <person name="Kewalramani A.R."/>
            <person name="Longmire J."/>
            <person name="Lucas S."/>
            <person name="Malfatti S."/>
            <person name="McMurry K."/>
            <person name="Meincke L.J."/>
            <person name="Misra M."/>
            <person name="Moseman B.L."/>
            <person name="Mundt M."/>
            <person name="Munk A.C."/>
            <person name="Okinaka R.T."/>
            <person name="Parson-Quintana B."/>
            <person name="Reilly L.P."/>
            <person name="Richardson P."/>
            <person name="Robinson D.L."/>
            <person name="Rubin E."/>
            <person name="Saunders E."/>
            <person name="Tapia R."/>
            <person name="Tesmer J.G."/>
            <person name="Thayer N."/>
            <person name="Thompson L.S."/>
            <person name="Tice H."/>
            <person name="Ticknor L.O."/>
            <person name="Wills P.L."/>
            <person name="Brettin T.S."/>
            <person name="Gilna P."/>
        </authorList>
    </citation>
    <scope>NUCLEOTIDE SEQUENCE [LARGE SCALE GENOMIC DNA]</scope>
    <source>
        <strain>97-27</strain>
    </source>
</reference>
<evidence type="ECO:0000255" key="1">
    <source>
        <dbReference type="HAMAP-Rule" id="MF_01538"/>
    </source>
</evidence>
<gene>
    <name type="ordered locus">BT9727_2085</name>
</gene>
<proteinExistence type="inferred from homology"/>
<accession>Q6HJ64</accession>
<dbReference type="EMBL" id="AE017355">
    <property type="protein sequence ID" value="AAT62204.1"/>
    <property type="molecule type" value="Genomic_DNA"/>
</dbReference>
<dbReference type="RefSeq" id="WP_000750724.1">
    <property type="nucleotide sequence ID" value="NC_005957.1"/>
</dbReference>
<dbReference type="RefSeq" id="YP_036412.1">
    <property type="nucleotide sequence ID" value="NC_005957.1"/>
</dbReference>
<dbReference type="SMR" id="Q6HJ64"/>
<dbReference type="KEGG" id="btk:BT9727_2085"/>
<dbReference type="PATRIC" id="fig|281309.8.peg.2190"/>
<dbReference type="HOGENOM" id="CLU_177534_0_0_9"/>
<dbReference type="Proteomes" id="UP000001301">
    <property type="component" value="Chromosome"/>
</dbReference>
<dbReference type="Gene3D" id="1.10.150.260">
    <property type="entry name" value="YozE SAM-like"/>
    <property type="match status" value="1"/>
</dbReference>
<dbReference type="HAMAP" id="MF_01538">
    <property type="entry name" value="UPF0346"/>
    <property type="match status" value="1"/>
</dbReference>
<dbReference type="InterPro" id="IPR010673">
    <property type="entry name" value="UPF0346"/>
</dbReference>
<dbReference type="InterPro" id="IPR023089">
    <property type="entry name" value="YozE_SAM-like"/>
</dbReference>
<dbReference type="InterPro" id="IPR036806">
    <property type="entry name" value="YozE_SAM-like_sf"/>
</dbReference>
<dbReference type="NCBIfam" id="NF010193">
    <property type="entry name" value="PRK13672.1"/>
    <property type="match status" value="1"/>
</dbReference>
<dbReference type="Pfam" id="PF06855">
    <property type="entry name" value="YozE_SAM_like"/>
    <property type="match status" value="1"/>
</dbReference>
<dbReference type="PIRSF" id="PIRSF037262">
    <property type="entry name" value="UCP037262"/>
    <property type="match status" value="1"/>
</dbReference>
<dbReference type="SUPFAM" id="SSF140652">
    <property type="entry name" value="YozE-like"/>
    <property type="match status" value="1"/>
</dbReference>
<protein>
    <recommendedName>
        <fullName evidence="1">UPF0346 protein BT9727_2085</fullName>
    </recommendedName>
</protein>
<feature type="chain" id="PRO_0000164268" description="UPF0346 protein BT9727_2085">
    <location>
        <begin position="1"/>
        <end position="71"/>
    </location>
</feature>
<comment type="similarity">
    <text evidence="1">Belongs to the UPF0346 family.</text>
</comment>